<evidence type="ECO:0000305" key="1"/>
<gene>
    <name type="primary">RPS13</name>
</gene>
<protein>
    <recommendedName>
        <fullName evidence="1">Small ribosomal subunit protein uS15</fullName>
    </recommendedName>
    <alternativeName>
        <fullName>40S ribosomal protein S13</fullName>
    </alternativeName>
</protein>
<accession>Q05761</accession>
<organism>
    <name type="scientific">Zea mays</name>
    <name type="common">Maize</name>
    <dbReference type="NCBI Taxonomy" id="4577"/>
    <lineage>
        <taxon>Eukaryota</taxon>
        <taxon>Viridiplantae</taxon>
        <taxon>Streptophyta</taxon>
        <taxon>Embryophyta</taxon>
        <taxon>Tracheophyta</taxon>
        <taxon>Spermatophyta</taxon>
        <taxon>Magnoliopsida</taxon>
        <taxon>Liliopsida</taxon>
        <taxon>Poales</taxon>
        <taxon>Poaceae</taxon>
        <taxon>PACMAD clade</taxon>
        <taxon>Panicoideae</taxon>
        <taxon>Andropogonodae</taxon>
        <taxon>Andropogoneae</taxon>
        <taxon>Tripsacinae</taxon>
        <taxon>Zea</taxon>
    </lineage>
</organism>
<dbReference type="EMBL" id="X62455">
    <property type="protein sequence ID" value="CAA44311.1"/>
    <property type="molecule type" value="mRNA"/>
</dbReference>
<dbReference type="PIR" id="S30146">
    <property type="entry name" value="S30146"/>
</dbReference>
<dbReference type="RefSeq" id="NP_001105708.1">
    <property type="nucleotide sequence ID" value="NM_001112238.2"/>
</dbReference>
<dbReference type="SMR" id="Q05761"/>
<dbReference type="FunCoup" id="Q05761">
    <property type="interactions" value="2425"/>
</dbReference>
<dbReference type="STRING" id="4577.Q05761"/>
<dbReference type="PaxDb" id="4577-GRMZM2G158034_P01"/>
<dbReference type="GeneID" id="542726"/>
<dbReference type="KEGG" id="zma:542726"/>
<dbReference type="MaizeGDB" id="65480"/>
<dbReference type="eggNOG" id="KOG0400">
    <property type="taxonomic scope" value="Eukaryota"/>
</dbReference>
<dbReference type="InParanoid" id="Q05761"/>
<dbReference type="OrthoDB" id="623277at2759"/>
<dbReference type="Proteomes" id="UP000007305">
    <property type="component" value="Unplaced"/>
</dbReference>
<dbReference type="ExpressionAtlas" id="Q05761">
    <property type="expression patterns" value="baseline and differential"/>
</dbReference>
<dbReference type="GO" id="GO:0022627">
    <property type="term" value="C:cytosolic small ribosomal subunit"/>
    <property type="evidence" value="ECO:0000318"/>
    <property type="project" value="GO_Central"/>
</dbReference>
<dbReference type="GO" id="GO:0005730">
    <property type="term" value="C:nucleolus"/>
    <property type="evidence" value="ECO:0000318"/>
    <property type="project" value="GO_Central"/>
</dbReference>
<dbReference type="GO" id="GO:0070181">
    <property type="term" value="F:small ribosomal subunit rRNA binding"/>
    <property type="evidence" value="ECO:0000318"/>
    <property type="project" value="GO_Central"/>
</dbReference>
<dbReference type="GO" id="GO:0003735">
    <property type="term" value="F:structural constituent of ribosome"/>
    <property type="evidence" value="ECO:0000318"/>
    <property type="project" value="GO_Central"/>
</dbReference>
<dbReference type="GO" id="GO:0006412">
    <property type="term" value="P:translation"/>
    <property type="evidence" value="ECO:0007669"/>
    <property type="project" value="InterPro"/>
</dbReference>
<dbReference type="CDD" id="cd00353">
    <property type="entry name" value="Ribosomal_S15p_S13e"/>
    <property type="match status" value="1"/>
</dbReference>
<dbReference type="FunFam" id="1.10.287.10:FF:000003">
    <property type="entry name" value="40S ribosomal protein S13"/>
    <property type="match status" value="1"/>
</dbReference>
<dbReference type="FunFam" id="4.10.860.130:FF:000001">
    <property type="entry name" value="40S ribosomal protein S13"/>
    <property type="match status" value="1"/>
</dbReference>
<dbReference type="Gene3D" id="4.10.860.130">
    <property type="match status" value="1"/>
</dbReference>
<dbReference type="Gene3D" id="1.10.287.10">
    <property type="entry name" value="S15/NS1, RNA-binding"/>
    <property type="match status" value="1"/>
</dbReference>
<dbReference type="HAMAP" id="MF_01343_A">
    <property type="entry name" value="Ribosomal_uS15_A"/>
    <property type="match status" value="1"/>
</dbReference>
<dbReference type="InterPro" id="IPR000589">
    <property type="entry name" value="Ribosomal_uS15"/>
</dbReference>
<dbReference type="InterPro" id="IPR023029">
    <property type="entry name" value="Ribosomal_uS15_arc_euk"/>
</dbReference>
<dbReference type="InterPro" id="IPR012606">
    <property type="entry name" value="Ribosomal_uS15_N"/>
</dbReference>
<dbReference type="InterPro" id="IPR009068">
    <property type="entry name" value="uS15_NS1_RNA-bd_sf"/>
</dbReference>
<dbReference type="NCBIfam" id="NF006331">
    <property type="entry name" value="PRK08561.1"/>
    <property type="match status" value="1"/>
</dbReference>
<dbReference type="PANTHER" id="PTHR11885">
    <property type="entry name" value="RIBOSOMAL PROTEIN S15P/S13E"/>
    <property type="match status" value="1"/>
</dbReference>
<dbReference type="PANTHER" id="PTHR11885:SF6">
    <property type="entry name" value="SMALL RIBOSOMAL SUBUNIT PROTEIN US15"/>
    <property type="match status" value="1"/>
</dbReference>
<dbReference type="Pfam" id="PF08069">
    <property type="entry name" value="Ribosomal_S13_N"/>
    <property type="match status" value="1"/>
</dbReference>
<dbReference type="Pfam" id="PF00312">
    <property type="entry name" value="Ribosomal_S15"/>
    <property type="match status" value="1"/>
</dbReference>
<dbReference type="SMART" id="SM01386">
    <property type="entry name" value="Ribosomal_S13_N"/>
    <property type="match status" value="1"/>
</dbReference>
<dbReference type="SMART" id="SM01387">
    <property type="entry name" value="Ribosomal_S15"/>
    <property type="match status" value="1"/>
</dbReference>
<dbReference type="SUPFAM" id="SSF47060">
    <property type="entry name" value="S15/NS1 RNA-binding domain"/>
    <property type="match status" value="1"/>
</dbReference>
<dbReference type="PROSITE" id="PS00362">
    <property type="entry name" value="RIBOSOMAL_S15"/>
    <property type="match status" value="1"/>
</dbReference>
<proteinExistence type="evidence at transcript level"/>
<name>RS13_MAIZE</name>
<reference key="1">
    <citation type="journal article" date="1993" name="Plant Mol. Biol.">
        <title>cDNA nucleotide sequence and expression of a maize cytoplasmic ribosomal protein S13 gene.</title>
        <authorList>
            <person name="Joanin P."/>
            <person name="Gigot C."/>
            <person name="Philipps G."/>
        </authorList>
    </citation>
    <scope>NUCLEOTIDE SEQUENCE [MRNA]</scope>
</reference>
<comment type="similarity">
    <text evidence="1">Belongs to the universal ribosomal protein uS15 family.</text>
</comment>
<feature type="chain" id="PRO_0000115682" description="Small ribosomal subunit protein uS15">
    <location>
        <begin position="1"/>
        <end position="151"/>
    </location>
</feature>
<keyword id="KW-1185">Reference proteome</keyword>
<keyword id="KW-0687">Ribonucleoprotein</keyword>
<keyword id="KW-0689">Ribosomal protein</keyword>
<sequence>MGAMHSRGKGISSSALPYKRTPPTWLKTAASDVEEMITKAAKKGQMPSQIGVLLRDQHGIPLVKSVTGSKILRILKAHGLAPEIPEDLYFLIKKAVAIRKHLERNRKDKDSKFRLILVESRIHRLARYYKRTKKLPPTWKYESTTASTLVA</sequence>